<feature type="chain" id="PRO_1000034250" description="Transcription elongation factor GreA">
    <location>
        <begin position="1"/>
        <end position="157"/>
    </location>
</feature>
<feature type="region of interest" description="Disordered" evidence="2">
    <location>
        <begin position="1"/>
        <end position="60"/>
    </location>
</feature>
<feature type="coiled-coil region" evidence="1">
    <location>
        <begin position="46"/>
        <end position="73"/>
    </location>
</feature>
<feature type="compositionally biased region" description="Basic and acidic residues" evidence="2">
    <location>
        <begin position="16"/>
        <end position="60"/>
    </location>
</feature>
<accession>Q89DR1</accession>
<name>GREA_BRADU</name>
<protein>
    <recommendedName>
        <fullName evidence="1">Transcription elongation factor GreA</fullName>
    </recommendedName>
    <alternativeName>
        <fullName evidence="1">Transcript cleavage factor GreA</fullName>
    </alternativeName>
</protein>
<evidence type="ECO:0000255" key="1">
    <source>
        <dbReference type="HAMAP-Rule" id="MF_00105"/>
    </source>
</evidence>
<evidence type="ECO:0000256" key="2">
    <source>
        <dbReference type="SAM" id="MobiDB-lite"/>
    </source>
</evidence>
<dbReference type="EMBL" id="BA000040">
    <property type="protein sequence ID" value="BAC52643.1"/>
    <property type="molecule type" value="Genomic_DNA"/>
</dbReference>
<dbReference type="RefSeq" id="NP_774018.1">
    <property type="nucleotide sequence ID" value="NC_004463.1"/>
</dbReference>
<dbReference type="RefSeq" id="WP_011090113.1">
    <property type="nucleotide sequence ID" value="NC_004463.1"/>
</dbReference>
<dbReference type="SMR" id="Q89DR1"/>
<dbReference type="FunCoup" id="Q89DR1">
    <property type="interactions" value="608"/>
</dbReference>
<dbReference type="STRING" id="224911.AAV28_34575"/>
<dbReference type="EnsemblBacteria" id="BAC52643">
    <property type="protein sequence ID" value="BAC52643"/>
    <property type="gene ID" value="BAC52643"/>
</dbReference>
<dbReference type="GeneID" id="46494337"/>
<dbReference type="KEGG" id="bja:blr7378"/>
<dbReference type="PATRIC" id="fig|224911.44.peg.7464"/>
<dbReference type="eggNOG" id="COG0782">
    <property type="taxonomic scope" value="Bacteria"/>
</dbReference>
<dbReference type="HOGENOM" id="CLU_101379_2_0_5"/>
<dbReference type="InParanoid" id="Q89DR1"/>
<dbReference type="OrthoDB" id="9808774at2"/>
<dbReference type="PhylomeDB" id="Q89DR1"/>
<dbReference type="Proteomes" id="UP000002526">
    <property type="component" value="Chromosome"/>
</dbReference>
<dbReference type="GO" id="GO:0003677">
    <property type="term" value="F:DNA binding"/>
    <property type="evidence" value="ECO:0007669"/>
    <property type="project" value="UniProtKB-UniRule"/>
</dbReference>
<dbReference type="GO" id="GO:0070063">
    <property type="term" value="F:RNA polymerase binding"/>
    <property type="evidence" value="ECO:0007669"/>
    <property type="project" value="InterPro"/>
</dbReference>
<dbReference type="GO" id="GO:0006354">
    <property type="term" value="P:DNA-templated transcription elongation"/>
    <property type="evidence" value="ECO:0000318"/>
    <property type="project" value="GO_Central"/>
</dbReference>
<dbReference type="GO" id="GO:0032784">
    <property type="term" value="P:regulation of DNA-templated transcription elongation"/>
    <property type="evidence" value="ECO:0007669"/>
    <property type="project" value="UniProtKB-UniRule"/>
</dbReference>
<dbReference type="FunFam" id="1.10.287.180:FF:000001">
    <property type="entry name" value="Transcription elongation factor GreA"/>
    <property type="match status" value="1"/>
</dbReference>
<dbReference type="FunFam" id="3.10.50.30:FF:000001">
    <property type="entry name" value="Transcription elongation factor GreA"/>
    <property type="match status" value="1"/>
</dbReference>
<dbReference type="Gene3D" id="3.10.50.30">
    <property type="entry name" value="Transcription elongation factor, GreA/GreB, C-terminal domain"/>
    <property type="match status" value="1"/>
</dbReference>
<dbReference type="Gene3D" id="1.10.287.180">
    <property type="entry name" value="Transcription elongation factor, GreA/GreB, N-terminal domain"/>
    <property type="match status" value="1"/>
</dbReference>
<dbReference type="HAMAP" id="MF_00105">
    <property type="entry name" value="GreA_GreB"/>
    <property type="match status" value="1"/>
</dbReference>
<dbReference type="InterPro" id="IPR036953">
    <property type="entry name" value="GreA/GreB_C_sf"/>
</dbReference>
<dbReference type="InterPro" id="IPR018151">
    <property type="entry name" value="TF_GreA/GreB_CS"/>
</dbReference>
<dbReference type="InterPro" id="IPR006359">
    <property type="entry name" value="Tscrpt_elong_fac_GreA"/>
</dbReference>
<dbReference type="InterPro" id="IPR028624">
    <property type="entry name" value="Tscrpt_elong_fac_GreA/B"/>
</dbReference>
<dbReference type="InterPro" id="IPR001437">
    <property type="entry name" value="Tscrpt_elong_fac_GreA/B_C"/>
</dbReference>
<dbReference type="InterPro" id="IPR023459">
    <property type="entry name" value="Tscrpt_elong_fac_GreA/B_fam"/>
</dbReference>
<dbReference type="InterPro" id="IPR022691">
    <property type="entry name" value="Tscrpt_elong_fac_GreA/B_N"/>
</dbReference>
<dbReference type="InterPro" id="IPR036805">
    <property type="entry name" value="Tscrpt_elong_fac_GreA/B_N_sf"/>
</dbReference>
<dbReference type="NCBIfam" id="TIGR01462">
    <property type="entry name" value="greA"/>
    <property type="match status" value="1"/>
</dbReference>
<dbReference type="NCBIfam" id="NF001261">
    <property type="entry name" value="PRK00226.1-2"/>
    <property type="match status" value="1"/>
</dbReference>
<dbReference type="NCBIfam" id="NF001263">
    <property type="entry name" value="PRK00226.1-4"/>
    <property type="match status" value="1"/>
</dbReference>
<dbReference type="NCBIfam" id="NF001264">
    <property type="entry name" value="PRK00226.1-5"/>
    <property type="match status" value="1"/>
</dbReference>
<dbReference type="PANTHER" id="PTHR30437">
    <property type="entry name" value="TRANSCRIPTION ELONGATION FACTOR GREA"/>
    <property type="match status" value="1"/>
</dbReference>
<dbReference type="PANTHER" id="PTHR30437:SF4">
    <property type="entry name" value="TRANSCRIPTION ELONGATION FACTOR GREA"/>
    <property type="match status" value="1"/>
</dbReference>
<dbReference type="Pfam" id="PF01272">
    <property type="entry name" value="GreA_GreB"/>
    <property type="match status" value="1"/>
</dbReference>
<dbReference type="Pfam" id="PF03449">
    <property type="entry name" value="GreA_GreB_N"/>
    <property type="match status" value="1"/>
</dbReference>
<dbReference type="PIRSF" id="PIRSF006092">
    <property type="entry name" value="GreA_GreB"/>
    <property type="match status" value="1"/>
</dbReference>
<dbReference type="SUPFAM" id="SSF54534">
    <property type="entry name" value="FKBP-like"/>
    <property type="match status" value="1"/>
</dbReference>
<dbReference type="SUPFAM" id="SSF46557">
    <property type="entry name" value="GreA transcript cleavage protein, N-terminal domain"/>
    <property type="match status" value="1"/>
</dbReference>
<dbReference type="PROSITE" id="PS00829">
    <property type="entry name" value="GREAB_1"/>
    <property type="match status" value="1"/>
</dbReference>
<proteinExistence type="inferred from homology"/>
<organism>
    <name type="scientific">Bradyrhizobium diazoefficiens (strain JCM 10833 / BCRC 13528 / IAM 13628 / NBRC 14792 / USDA 110)</name>
    <dbReference type="NCBI Taxonomy" id="224911"/>
    <lineage>
        <taxon>Bacteria</taxon>
        <taxon>Pseudomonadati</taxon>
        <taxon>Pseudomonadota</taxon>
        <taxon>Alphaproteobacteria</taxon>
        <taxon>Hyphomicrobiales</taxon>
        <taxon>Nitrobacteraceae</taxon>
        <taxon>Bradyrhizobium</taxon>
    </lineage>
</organism>
<sequence length="157" mass="17179">MEKVPMTSAGFAALGEELKKRQSEDRPRIIEHIAEARSHGDLSENAEYHAAKEEQSHNEGRIAELEDKLARADIIDISKLSGDTIKFGATVTLVDEDTEKKAVWQIVGEVEADAKKGRISITSPLARALIGKKKGSTVEVNAPGGAKAYEITKVEWR</sequence>
<reference key="1">
    <citation type="journal article" date="2002" name="DNA Res.">
        <title>Complete genomic sequence of nitrogen-fixing symbiotic bacterium Bradyrhizobium japonicum USDA110.</title>
        <authorList>
            <person name="Kaneko T."/>
            <person name="Nakamura Y."/>
            <person name="Sato S."/>
            <person name="Minamisawa K."/>
            <person name="Uchiumi T."/>
            <person name="Sasamoto S."/>
            <person name="Watanabe A."/>
            <person name="Idesawa K."/>
            <person name="Iriguchi M."/>
            <person name="Kawashima K."/>
            <person name="Kohara M."/>
            <person name="Matsumoto M."/>
            <person name="Shimpo S."/>
            <person name="Tsuruoka H."/>
            <person name="Wada T."/>
            <person name="Yamada M."/>
            <person name="Tabata S."/>
        </authorList>
    </citation>
    <scope>NUCLEOTIDE SEQUENCE [LARGE SCALE GENOMIC DNA]</scope>
    <source>
        <strain>JCM 10833 / BCRC 13528 / IAM 13628 / NBRC 14792 / USDA 110</strain>
    </source>
</reference>
<gene>
    <name evidence="1" type="primary">greA</name>
    <name type="ordered locus">blr7378</name>
</gene>
<keyword id="KW-0175">Coiled coil</keyword>
<keyword id="KW-0238">DNA-binding</keyword>
<keyword id="KW-1185">Reference proteome</keyword>
<keyword id="KW-0804">Transcription</keyword>
<keyword id="KW-0805">Transcription regulation</keyword>
<comment type="function">
    <text evidence="1">Necessary for efficient RNA polymerase transcription elongation past template-encoded arresting sites. The arresting sites in DNA have the property of trapping a certain fraction of elongating RNA polymerases that pass through, resulting in locked ternary complexes. Cleavage of the nascent transcript by cleavage factors such as GreA or GreB allows the resumption of elongation from the new 3'terminus. GreA releases sequences of 2 to 3 nucleotides.</text>
</comment>
<comment type="similarity">
    <text evidence="1">Belongs to the GreA/GreB family.</text>
</comment>